<name>FB119_ARATH</name>
<accession>Q9XIN8</accession>
<sequence length="337" mass="38605">MATVDVINGDSISTLHSDIIQTQILTRLDGPTLASTATTSSYLQTLCTEEKLWQELSIDTWPSINDPRVVQAISSFPSGYRSFFADSYPFTEHTWQSEKHDPPTGLISAVDLYYRGEIIYSKVQEMETEKGKSGWFLSSPFRVDILDPKESVQTRIRYPGGDYEAWVKDMEESMKLNWILIDPIKKRAANISSRKAVSARRNWLTGDLEIRFSTVVTAEAAEVAAVVSCGSAEAWKEVDEEVGGEIHVRDVRLQVEDIEGKCMKGRDSLVILQGLLDGKRSCKDDEERRAKERYEEYVRMKIQWRENKERREKAQDTICMIFGFSMFVLLWSFILLR</sequence>
<dbReference type="EMBL" id="AC006233">
    <property type="protein sequence ID" value="AAD41998.1"/>
    <property type="molecule type" value="Genomic_DNA"/>
</dbReference>
<dbReference type="EMBL" id="CP002685">
    <property type="protein sequence ID" value="AEC07971.1"/>
    <property type="molecule type" value="Genomic_DNA"/>
</dbReference>
<dbReference type="EMBL" id="AF370592">
    <property type="protein sequence ID" value="AAK43911.1"/>
    <property type="molecule type" value="mRNA"/>
</dbReference>
<dbReference type="PIR" id="D84671">
    <property type="entry name" value="D84671"/>
</dbReference>
<dbReference type="RefSeq" id="NP_180299.1">
    <property type="nucleotide sequence ID" value="NM_128290.4"/>
</dbReference>
<dbReference type="SMR" id="Q9XIN8"/>
<dbReference type="FunCoup" id="Q9XIN8">
    <property type="interactions" value="98"/>
</dbReference>
<dbReference type="STRING" id="3702.Q9XIN8"/>
<dbReference type="PaxDb" id="3702-AT2G27310.1"/>
<dbReference type="ProteomicsDB" id="230823"/>
<dbReference type="EnsemblPlants" id="AT2G27310.1">
    <property type="protein sequence ID" value="AT2G27310.1"/>
    <property type="gene ID" value="AT2G27310"/>
</dbReference>
<dbReference type="GeneID" id="817274"/>
<dbReference type="Gramene" id="AT2G27310.1">
    <property type="protein sequence ID" value="AT2G27310.1"/>
    <property type="gene ID" value="AT2G27310"/>
</dbReference>
<dbReference type="KEGG" id="ath:AT2G27310"/>
<dbReference type="Araport" id="AT2G27310"/>
<dbReference type="TAIR" id="AT2G27310"/>
<dbReference type="eggNOG" id="ENOG502QV6F">
    <property type="taxonomic scope" value="Eukaryota"/>
</dbReference>
<dbReference type="HOGENOM" id="CLU_057235_0_0_1"/>
<dbReference type="InParanoid" id="Q9XIN8"/>
<dbReference type="OMA" id="FTEHTWQ"/>
<dbReference type="PhylomeDB" id="Q9XIN8"/>
<dbReference type="PRO" id="PR:Q9XIN8"/>
<dbReference type="Proteomes" id="UP000006548">
    <property type="component" value="Chromosome 2"/>
</dbReference>
<dbReference type="ExpressionAtlas" id="Q9XIN8">
    <property type="expression patterns" value="baseline and differential"/>
</dbReference>
<dbReference type="InterPro" id="IPR045283">
    <property type="entry name" value="AT3G44326-like"/>
</dbReference>
<dbReference type="InterPro" id="IPR036047">
    <property type="entry name" value="F-box-like_dom_sf"/>
</dbReference>
<dbReference type="PANTHER" id="PTHR33736:SF18">
    <property type="entry name" value="F-BOX DOMAIN-CONTAINING PROTEIN"/>
    <property type="match status" value="1"/>
</dbReference>
<dbReference type="PANTHER" id="PTHR33736">
    <property type="entry name" value="F-BOX PROTEIN-RELATED"/>
    <property type="match status" value="1"/>
</dbReference>
<dbReference type="SUPFAM" id="SSF81383">
    <property type="entry name" value="F-box domain"/>
    <property type="match status" value="1"/>
</dbReference>
<protein>
    <recommendedName>
        <fullName>F-box protein At2g27310</fullName>
    </recommendedName>
</protein>
<proteinExistence type="evidence at transcript level"/>
<feature type="chain" id="PRO_0000283390" description="F-box protein At2g27310">
    <location>
        <begin position="1"/>
        <end position="337"/>
    </location>
</feature>
<feature type="domain" description="F-box">
    <location>
        <begin position="10"/>
        <end position="58"/>
    </location>
</feature>
<organism>
    <name type="scientific">Arabidopsis thaliana</name>
    <name type="common">Mouse-ear cress</name>
    <dbReference type="NCBI Taxonomy" id="3702"/>
    <lineage>
        <taxon>Eukaryota</taxon>
        <taxon>Viridiplantae</taxon>
        <taxon>Streptophyta</taxon>
        <taxon>Embryophyta</taxon>
        <taxon>Tracheophyta</taxon>
        <taxon>Spermatophyta</taxon>
        <taxon>Magnoliopsida</taxon>
        <taxon>eudicotyledons</taxon>
        <taxon>Gunneridae</taxon>
        <taxon>Pentapetalae</taxon>
        <taxon>rosids</taxon>
        <taxon>malvids</taxon>
        <taxon>Brassicales</taxon>
        <taxon>Brassicaceae</taxon>
        <taxon>Camelineae</taxon>
        <taxon>Arabidopsis</taxon>
    </lineage>
</organism>
<keyword id="KW-1185">Reference proteome</keyword>
<gene>
    <name type="ordered locus">At2g27310</name>
    <name type="ORF">F12K2.11</name>
</gene>
<reference key="1">
    <citation type="journal article" date="1999" name="Nature">
        <title>Sequence and analysis of chromosome 2 of the plant Arabidopsis thaliana.</title>
        <authorList>
            <person name="Lin X."/>
            <person name="Kaul S."/>
            <person name="Rounsley S.D."/>
            <person name="Shea T.P."/>
            <person name="Benito M.-I."/>
            <person name="Town C.D."/>
            <person name="Fujii C.Y."/>
            <person name="Mason T.M."/>
            <person name="Bowman C.L."/>
            <person name="Barnstead M.E."/>
            <person name="Feldblyum T.V."/>
            <person name="Buell C.R."/>
            <person name="Ketchum K.A."/>
            <person name="Lee J.J."/>
            <person name="Ronning C.M."/>
            <person name="Koo H.L."/>
            <person name="Moffat K.S."/>
            <person name="Cronin L.A."/>
            <person name="Shen M."/>
            <person name="Pai G."/>
            <person name="Van Aken S."/>
            <person name="Umayam L."/>
            <person name="Tallon L.J."/>
            <person name="Gill J.E."/>
            <person name="Adams M.D."/>
            <person name="Carrera A.J."/>
            <person name="Creasy T.H."/>
            <person name="Goodman H.M."/>
            <person name="Somerville C.R."/>
            <person name="Copenhaver G.P."/>
            <person name="Preuss D."/>
            <person name="Nierman W.C."/>
            <person name="White O."/>
            <person name="Eisen J.A."/>
            <person name="Salzberg S.L."/>
            <person name="Fraser C.M."/>
            <person name="Venter J.C."/>
        </authorList>
    </citation>
    <scope>NUCLEOTIDE SEQUENCE [LARGE SCALE GENOMIC DNA]</scope>
    <source>
        <strain>cv. Columbia</strain>
    </source>
</reference>
<reference key="2">
    <citation type="journal article" date="2017" name="Plant J.">
        <title>Araport11: a complete reannotation of the Arabidopsis thaliana reference genome.</title>
        <authorList>
            <person name="Cheng C.Y."/>
            <person name="Krishnakumar V."/>
            <person name="Chan A.P."/>
            <person name="Thibaud-Nissen F."/>
            <person name="Schobel S."/>
            <person name="Town C.D."/>
        </authorList>
    </citation>
    <scope>GENOME REANNOTATION</scope>
    <source>
        <strain>cv. Columbia</strain>
    </source>
</reference>
<reference key="3">
    <citation type="journal article" date="2003" name="Science">
        <title>Empirical analysis of transcriptional activity in the Arabidopsis genome.</title>
        <authorList>
            <person name="Yamada K."/>
            <person name="Lim J."/>
            <person name="Dale J.M."/>
            <person name="Chen H."/>
            <person name="Shinn P."/>
            <person name="Palm C.J."/>
            <person name="Southwick A.M."/>
            <person name="Wu H.C."/>
            <person name="Kim C.J."/>
            <person name="Nguyen M."/>
            <person name="Pham P.K."/>
            <person name="Cheuk R.F."/>
            <person name="Karlin-Newmann G."/>
            <person name="Liu S.X."/>
            <person name="Lam B."/>
            <person name="Sakano H."/>
            <person name="Wu T."/>
            <person name="Yu G."/>
            <person name="Miranda M."/>
            <person name="Quach H.L."/>
            <person name="Tripp M."/>
            <person name="Chang C.H."/>
            <person name="Lee J.M."/>
            <person name="Toriumi M.J."/>
            <person name="Chan M.M."/>
            <person name="Tang C.C."/>
            <person name="Onodera C.S."/>
            <person name="Deng J.M."/>
            <person name="Akiyama K."/>
            <person name="Ansari Y."/>
            <person name="Arakawa T."/>
            <person name="Banh J."/>
            <person name="Banno F."/>
            <person name="Bowser L."/>
            <person name="Brooks S.Y."/>
            <person name="Carninci P."/>
            <person name="Chao Q."/>
            <person name="Choy N."/>
            <person name="Enju A."/>
            <person name="Goldsmith A.D."/>
            <person name="Gurjal M."/>
            <person name="Hansen N.F."/>
            <person name="Hayashizaki Y."/>
            <person name="Johnson-Hopson C."/>
            <person name="Hsuan V.W."/>
            <person name="Iida K."/>
            <person name="Karnes M."/>
            <person name="Khan S."/>
            <person name="Koesema E."/>
            <person name="Ishida J."/>
            <person name="Jiang P.X."/>
            <person name="Jones T."/>
            <person name="Kawai J."/>
            <person name="Kamiya A."/>
            <person name="Meyers C."/>
            <person name="Nakajima M."/>
            <person name="Narusaka M."/>
            <person name="Seki M."/>
            <person name="Sakurai T."/>
            <person name="Satou M."/>
            <person name="Tamse R."/>
            <person name="Vaysberg M."/>
            <person name="Wallender E.K."/>
            <person name="Wong C."/>
            <person name="Yamamura Y."/>
            <person name="Yuan S."/>
            <person name="Shinozaki K."/>
            <person name="Davis R.W."/>
            <person name="Theologis A."/>
            <person name="Ecker J.R."/>
        </authorList>
    </citation>
    <scope>NUCLEOTIDE SEQUENCE [LARGE SCALE MRNA]</scope>
    <source>
        <strain>cv. Columbia</strain>
    </source>
</reference>